<sequence>MELEQLLNSVPEYAKDLKLNMGGVLRQTELTEQQAWGTAVACAIAARNPQLRESVLGEAAKHLNEQALFAAKAAASVMGMNNIFYRFRHLSTNPKYGAMPARLRMQVIAKHGSDPIDFELWCLAVSAMNGCGVCVDSHENVLREKGVSEEAVLAAIRIASTIHGLAAILDVEADPIA</sequence>
<dbReference type="EC" id="1.11.1.28" evidence="2"/>
<dbReference type="EMBL" id="CP000473">
    <property type="protein sequence ID" value="ABJ81421.1"/>
    <property type="molecule type" value="Genomic_DNA"/>
</dbReference>
<dbReference type="SMR" id="Q02BZ5"/>
<dbReference type="STRING" id="234267.Acid_0411"/>
<dbReference type="PeroxiBase" id="4634">
    <property type="entry name" value="SuAhpD"/>
</dbReference>
<dbReference type="KEGG" id="sus:Acid_0411"/>
<dbReference type="eggNOG" id="COG2128">
    <property type="taxonomic scope" value="Bacteria"/>
</dbReference>
<dbReference type="HOGENOM" id="CLU_105328_0_0_0"/>
<dbReference type="InParanoid" id="Q02BZ5"/>
<dbReference type="OrthoDB" id="9801997at2"/>
<dbReference type="GO" id="GO:0008785">
    <property type="term" value="F:alkyl hydroperoxide reductase activity"/>
    <property type="evidence" value="ECO:0007669"/>
    <property type="project" value="UniProtKB-UniRule"/>
</dbReference>
<dbReference type="GO" id="GO:0015036">
    <property type="term" value="F:disulfide oxidoreductase activity"/>
    <property type="evidence" value="ECO:0007669"/>
    <property type="project" value="TreeGrafter"/>
</dbReference>
<dbReference type="GO" id="GO:0032843">
    <property type="term" value="F:hydroperoxide reductase activity"/>
    <property type="evidence" value="ECO:0007669"/>
    <property type="project" value="InterPro"/>
</dbReference>
<dbReference type="GO" id="GO:0051920">
    <property type="term" value="F:peroxiredoxin activity"/>
    <property type="evidence" value="ECO:0007669"/>
    <property type="project" value="InterPro"/>
</dbReference>
<dbReference type="GO" id="GO:0045454">
    <property type="term" value="P:cell redox homeostasis"/>
    <property type="evidence" value="ECO:0007669"/>
    <property type="project" value="TreeGrafter"/>
</dbReference>
<dbReference type="GO" id="GO:0006979">
    <property type="term" value="P:response to oxidative stress"/>
    <property type="evidence" value="ECO:0007669"/>
    <property type="project" value="InterPro"/>
</dbReference>
<dbReference type="Gene3D" id="1.20.1290.10">
    <property type="entry name" value="AhpD-like"/>
    <property type="match status" value="1"/>
</dbReference>
<dbReference type="HAMAP" id="MF_01676">
    <property type="entry name" value="AhpD"/>
    <property type="match status" value="1"/>
</dbReference>
<dbReference type="InterPro" id="IPR004674">
    <property type="entry name" value="AhpD"/>
</dbReference>
<dbReference type="InterPro" id="IPR029032">
    <property type="entry name" value="AhpD-like"/>
</dbReference>
<dbReference type="InterPro" id="IPR004675">
    <property type="entry name" value="AhpD_core"/>
</dbReference>
<dbReference type="InterPro" id="IPR003779">
    <property type="entry name" value="CMD-like"/>
</dbReference>
<dbReference type="NCBIfam" id="TIGR00777">
    <property type="entry name" value="ahpD"/>
    <property type="match status" value="1"/>
</dbReference>
<dbReference type="NCBIfam" id="TIGR00778">
    <property type="entry name" value="ahpD_dom"/>
    <property type="match status" value="1"/>
</dbReference>
<dbReference type="PANTHER" id="PTHR33930">
    <property type="entry name" value="ALKYL HYDROPEROXIDE REDUCTASE AHPD"/>
    <property type="match status" value="1"/>
</dbReference>
<dbReference type="PANTHER" id="PTHR33930:SF7">
    <property type="entry name" value="ALKYL HYDROPEROXIDE REDUCTASE AHPD"/>
    <property type="match status" value="1"/>
</dbReference>
<dbReference type="Pfam" id="PF02627">
    <property type="entry name" value="CMD"/>
    <property type="match status" value="1"/>
</dbReference>
<dbReference type="SUPFAM" id="SSF69118">
    <property type="entry name" value="AhpD-like"/>
    <property type="match status" value="1"/>
</dbReference>
<comment type="function">
    <text evidence="2">Antioxidant protein with alkyl hydroperoxidase activity. Required for the reduction of the AhpC active site cysteine residues and for the regeneration of the AhpC enzyme activity.</text>
</comment>
<comment type="catalytic activity">
    <reaction evidence="2">
        <text>N(6)-[(R)-dihydrolipoyl]-L-lysyl-[lipoyl-carrier protein] + a hydroperoxide = N(6)-[(R)-lipoyl]-L-lysyl-[lipoyl-carrier protein] + an alcohol + H2O</text>
        <dbReference type="Rhea" id="RHEA:62636"/>
        <dbReference type="Rhea" id="RHEA-COMP:10502"/>
        <dbReference type="Rhea" id="RHEA-COMP:16355"/>
        <dbReference type="ChEBI" id="CHEBI:15377"/>
        <dbReference type="ChEBI" id="CHEBI:30879"/>
        <dbReference type="ChEBI" id="CHEBI:35924"/>
        <dbReference type="ChEBI" id="CHEBI:83099"/>
        <dbReference type="ChEBI" id="CHEBI:83100"/>
        <dbReference type="EC" id="1.11.1.28"/>
    </reaction>
</comment>
<comment type="similarity">
    <text evidence="2">Belongs to the AhpD family.</text>
</comment>
<proteinExistence type="inferred from homology"/>
<evidence type="ECO:0000250" key="1"/>
<evidence type="ECO:0000255" key="2">
    <source>
        <dbReference type="HAMAP-Rule" id="MF_01676"/>
    </source>
</evidence>
<name>AHPD_SOLUE</name>
<protein>
    <recommendedName>
        <fullName evidence="2">Alkyl hydroperoxide reductase AhpD</fullName>
        <ecNumber evidence="2">1.11.1.28</ecNumber>
    </recommendedName>
    <alternativeName>
        <fullName evidence="2">Alkylhydroperoxidase AhpD</fullName>
    </alternativeName>
</protein>
<gene>
    <name evidence="2" type="primary">ahpD</name>
    <name type="ordered locus">Acid_0411</name>
</gene>
<feature type="chain" id="PRO_0000359506" description="Alkyl hydroperoxide reductase AhpD">
    <location>
        <begin position="1"/>
        <end position="177"/>
    </location>
</feature>
<feature type="active site" description="Proton donor" evidence="2">
    <location>
        <position position="131"/>
    </location>
</feature>
<feature type="active site" description="Cysteine sulfenic acid (-SOH) intermediate" evidence="2">
    <location>
        <position position="134"/>
    </location>
</feature>
<feature type="disulfide bond" evidence="1">
    <location>
        <begin position="131"/>
        <end position="134"/>
    </location>
</feature>
<feature type="disulfide bond" description="Interchain (with AhpC); in linked form" evidence="2">
    <location>
        <position position="134"/>
    </location>
</feature>
<keyword id="KW-0049">Antioxidant</keyword>
<keyword id="KW-1015">Disulfide bond</keyword>
<keyword id="KW-0560">Oxidoreductase</keyword>
<keyword id="KW-0575">Peroxidase</keyword>
<keyword id="KW-0676">Redox-active center</keyword>
<reference key="1">
    <citation type="journal article" date="2009" name="Appl. Environ. Microbiol.">
        <title>Three genomes from the phylum Acidobacteria provide insight into the lifestyles of these microorganisms in soils.</title>
        <authorList>
            <person name="Ward N.L."/>
            <person name="Challacombe J.F."/>
            <person name="Janssen P.H."/>
            <person name="Henrissat B."/>
            <person name="Coutinho P.M."/>
            <person name="Wu M."/>
            <person name="Xie G."/>
            <person name="Haft D.H."/>
            <person name="Sait M."/>
            <person name="Badger J."/>
            <person name="Barabote R.D."/>
            <person name="Bradley B."/>
            <person name="Brettin T.S."/>
            <person name="Brinkac L.M."/>
            <person name="Bruce D."/>
            <person name="Creasy T."/>
            <person name="Daugherty S.C."/>
            <person name="Davidsen T.M."/>
            <person name="DeBoy R.T."/>
            <person name="Detter J.C."/>
            <person name="Dodson R.J."/>
            <person name="Durkin A.S."/>
            <person name="Ganapathy A."/>
            <person name="Gwinn-Giglio M."/>
            <person name="Han C.S."/>
            <person name="Khouri H."/>
            <person name="Kiss H."/>
            <person name="Kothari S.P."/>
            <person name="Madupu R."/>
            <person name="Nelson K.E."/>
            <person name="Nelson W.C."/>
            <person name="Paulsen I."/>
            <person name="Penn K."/>
            <person name="Ren Q."/>
            <person name="Rosovitz M.J."/>
            <person name="Selengut J.D."/>
            <person name="Shrivastava S."/>
            <person name="Sullivan S.A."/>
            <person name="Tapia R."/>
            <person name="Thompson L.S."/>
            <person name="Watkins K.L."/>
            <person name="Yang Q."/>
            <person name="Yu C."/>
            <person name="Zafar N."/>
            <person name="Zhou L."/>
            <person name="Kuske C.R."/>
        </authorList>
    </citation>
    <scope>NUCLEOTIDE SEQUENCE [LARGE SCALE GENOMIC DNA]</scope>
    <source>
        <strain>Ellin6076</strain>
    </source>
</reference>
<organism>
    <name type="scientific">Solibacter usitatus (strain Ellin6076)</name>
    <dbReference type="NCBI Taxonomy" id="234267"/>
    <lineage>
        <taxon>Bacteria</taxon>
        <taxon>Pseudomonadati</taxon>
        <taxon>Acidobacteriota</taxon>
        <taxon>Terriglobia</taxon>
        <taxon>Bryobacterales</taxon>
        <taxon>Solibacteraceae</taxon>
        <taxon>Candidatus Solibacter</taxon>
    </lineage>
</organism>
<accession>Q02BZ5</accession>